<protein>
    <recommendedName>
        <fullName evidence="1">UPF0294 protein plu0699</fullName>
    </recommendedName>
</protein>
<feature type="chain" id="PRO_0000074640" description="UPF0294 protein plu0699">
    <location>
        <begin position="1"/>
        <end position="260"/>
    </location>
</feature>
<evidence type="ECO:0000255" key="1">
    <source>
        <dbReference type="HAMAP-Rule" id="MF_01119"/>
    </source>
</evidence>
<proteinExistence type="inferred from homology"/>
<accession>Q7N8M0</accession>
<keyword id="KW-0963">Cytoplasm</keyword>
<keyword id="KW-1185">Reference proteome</keyword>
<name>Y699_PHOLL</name>
<organism>
    <name type="scientific">Photorhabdus laumondii subsp. laumondii (strain DSM 15139 / CIP 105565 / TT01)</name>
    <name type="common">Photorhabdus luminescens subsp. laumondii</name>
    <dbReference type="NCBI Taxonomy" id="243265"/>
    <lineage>
        <taxon>Bacteria</taxon>
        <taxon>Pseudomonadati</taxon>
        <taxon>Pseudomonadota</taxon>
        <taxon>Gammaproteobacteria</taxon>
        <taxon>Enterobacterales</taxon>
        <taxon>Morganellaceae</taxon>
        <taxon>Photorhabdus</taxon>
    </lineage>
</organism>
<gene>
    <name type="ordered locus">plu0699</name>
</gene>
<dbReference type="EMBL" id="BX571861">
    <property type="protein sequence ID" value="CAE12994.1"/>
    <property type="molecule type" value="Genomic_DNA"/>
</dbReference>
<dbReference type="RefSeq" id="WP_011145075.1">
    <property type="nucleotide sequence ID" value="NC_005126.1"/>
</dbReference>
<dbReference type="SMR" id="Q7N8M0"/>
<dbReference type="STRING" id="243265.plu0699"/>
<dbReference type="GeneID" id="48846994"/>
<dbReference type="KEGG" id="plu:plu0699"/>
<dbReference type="eggNOG" id="COG3021">
    <property type="taxonomic scope" value="Bacteria"/>
</dbReference>
<dbReference type="HOGENOM" id="CLU_083563_0_0_6"/>
<dbReference type="OrthoDB" id="9793162at2"/>
<dbReference type="Proteomes" id="UP000002514">
    <property type="component" value="Chromosome"/>
</dbReference>
<dbReference type="GO" id="GO:0005737">
    <property type="term" value="C:cytoplasm"/>
    <property type="evidence" value="ECO:0007669"/>
    <property type="project" value="UniProtKB-SubCell"/>
</dbReference>
<dbReference type="GO" id="GO:0003824">
    <property type="term" value="F:catalytic activity"/>
    <property type="evidence" value="ECO:0007669"/>
    <property type="project" value="InterPro"/>
</dbReference>
<dbReference type="Gene3D" id="3.60.10.10">
    <property type="entry name" value="Endonuclease/exonuclease/phosphatase"/>
    <property type="match status" value="1"/>
</dbReference>
<dbReference type="HAMAP" id="MF_01119">
    <property type="entry name" value="UPF0294"/>
    <property type="match status" value="1"/>
</dbReference>
<dbReference type="InterPro" id="IPR036691">
    <property type="entry name" value="Endo/exonu/phosph_ase_sf"/>
</dbReference>
<dbReference type="InterPro" id="IPR005135">
    <property type="entry name" value="Endo/exonuclease/phosphatase"/>
</dbReference>
<dbReference type="InterPro" id="IPR022958">
    <property type="entry name" value="UPF0294"/>
</dbReference>
<dbReference type="NCBIfam" id="NF003839">
    <property type="entry name" value="PRK05421.1-1"/>
    <property type="match status" value="1"/>
</dbReference>
<dbReference type="NCBIfam" id="NF003840">
    <property type="entry name" value="PRK05421.1-2"/>
    <property type="match status" value="1"/>
</dbReference>
<dbReference type="NCBIfam" id="NF003841">
    <property type="entry name" value="PRK05421.1-3"/>
    <property type="match status" value="1"/>
</dbReference>
<dbReference type="NCBIfam" id="NF003842">
    <property type="entry name" value="PRK05421.1-4"/>
    <property type="match status" value="1"/>
</dbReference>
<dbReference type="Pfam" id="PF03372">
    <property type="entry name" value="Exo_endo_phos"/>
    <property type="match status" value="1"/>
</dbReference>
<dbReference type="SUPFAM" id="SSF56219">
    <property type="entry name" value="DNase I-like"/>
    <property type="match status" value="1"/>
</dbReference>
<reference key="1">
    <citation type="journal article" date="2003" name="Nat. Biotechnol.">
        <title>The genome sequence of the entomopathogenic bacterium Photorhabdus luminescens.</title>
        <authorList>
            <person name="Duchaud E."/>
            <person name="Rusniok C."/>
            <person name="Frangeul L."/>
            <person name="Buchrieser C."/>
            <person name="Givaudan A."/>
            <person name="Taourit S."/>
            <person name="Bocs S."/>
            <person name="Boursaux-Eude C."/>
            <person name="Chandler M."/>
            <person name="Charles J.-F."/>
            <person name="Dassa E."/>
            <person name="Derose R."/>
            <person name="Derzelle S."/>
            <person name="Freyssinet G."/>
            <person name="Gaudriault S."/>
            <person name="Medigue C."/>
            <person name="Lanois A."/>
            <person name="Powell K."/>
            <person name="Siguier P."/>
            <person name="Vincent R."/>
            <person name="Wingate V."/>
            <person name="Zouine M."/>
            <person name="Glaser P."/>
            <person name="Boemare N."/>
            <person name="Danchin A."/>
            <person name="Kunst F."/>
        </authorList>
    </citation>
    <scope>NUCLEOTIDE SEQUENCE [LARGE SCALE GENOMIC DNA]</scope>
    <source>
        <strain>DSM 15139 / CIP 105565 / TT01</strain>
    </source>
</reference>
<sequence>MVKKTYAIRYVAGQPVERVFPMSTHQLGNTLPVGTPLITGTNELRVVVWNIYKQQRPSWRKVLKELTNESQLILLQEAQTTPDLVEFATSNYLISDQVPAFLLPQHPSGVMTLATSHPVYCCPLREKEPLLRLSKSALITVYLLQDNRQLMVINVHAINFSFGVDVYSRQLNNIGVHVRLHNGPVIMAGDFNAWSKQRLNALKRFTRYLHLEEVSFTDDYRTIAFGRPLDFIFYRELNIANAIVIPTDASDHNPLVVNFY</sequence>
<comment type="subcellular location">
    <subcellularLocation>
        <location evidence="1">Cytoplasm</location>
    </subcellularLocation>
</comment>
<comment type="similarity">
    <text evidence="1">Belongs to the UPF0294 family.</text>
</comment>